<feature type="chain" id="PRO_1000095985" description="Phosphoribosylaminoimidazole-succinocarboxamide synthase">
    <location>
        <begin position="1"/>
        <end position="235"/>
    </location>
</feature>
<gene>
    <name evidence="1" type="primary">purC</name>
    <name type="ordered locus">Exig_0450</name>
</gene>
<name>PUR7_EXIS2</name>
<keyword id="KW-0067">ATP-binding</keyword>
<keyword id="KW-0436">Ligase</keyword>
<keyword id="KW-0547">Nucleotide-binding</keyword>
<keyword id="KW-0658">Purine biosynthesis</keyword>
<keyword id="KW-1185">Reference proteome</keyword>
<accession>B1YJ02</accession>
<dbReference type="EC" id="6.3.2.6" evidence="1"/>
<dbReference type="EMBL" id="CP001022">
    <property type="protein sequence ID" value="ACB59932.1"/>
    <property type="molecule type" value="Genomic_DNA"/>
</dbReference>
<dbReference type="RefSeq" id="WP_012369356.1">
    <property type="nucleotide sequence ID" value="NC_010556.1"/>
</dbReference>
<dbReference type="SMR" id="B1YJ02"/>
<dbReference type="STRING" id="262543.Exig_0450"/>
<dbReference type="KEGG" id="esi:Exig_0450"/>
<dbReference type="eggNOG" id="COG0152">
    <property type="taxonomic scope" value="Bacteria"/>
</dbReference>
<dbReference type="HOGENOM" id="CLU_061495_2_0_9"/>
<dbReference type="OrthoDB" id="9801549at2"/>
<dbReference type="UniPathway" id="UPA00074">
    <property type="reaction ID" value="UER00131"/>
</dbReference>
<dbReference type="Proteomes" id="UP000001681">
    <property type="component" value="Chromosome"/>
</dbReference>
<dbReference type="GO" id="GO:0005524">
    <property type="term" value="F:ATP binding"/>
    <property type="evidence" value="ECO:0007669"/>
    <property type="project" value="UniProtKB-KW"/>
</dbReference>
<dbReference type="GO" id="GO:0004639">
    <property type="term" value="F:phosphoribosylaminoimidazolesuccinocarboxamide synthase activity"/>
    <property type="evidence" value="ECO:0007669"/>
    <property type="project" value="UniProtKB-UniRule"/>
</dbReference>
<dbReference type="GO" id="GO:0006189">
    <property type="term" value="P:'de novo' IMP biosynthetic process"/>
    <property type="evidence" value="ECO:0007669"/>
    <property type="project" value="UniProtKB-UniRule"/>
</dbReference>
<dbReference type="GO" id="GO:0009236">
    <property type="term" value="P:cobalamin biosynthetic process"/>
    <property type="evidence" value="ECO:0007669"/>
    <property type="project" value="InterPro"/>
</dbReference>
<dbReference type="CDD" id="cd01415">
    <property type="entry name" value="SAICAR_synt_PurC"/>
    <property type="match status" value="1"/>
</dbReference>
<dbReference type="FunFam" id="3.30.470.20:FF:000006">
    <property type="entry name" value="Phosphoribosylaminoimidazole-succinocarboxamide synthase"/>
    <property type="match status" value="1"/>
</dbReference>
<dbReference type="Gene3D" id="3.30.470.20">
    <property type="entry name" value="ATP-grasp fold, B domain"/>
    <property type="match status" value="1"/>
</dbReference>
<dbReference type="Gene3D" id="3.30.200.20">
    <property type="entry name" value="Phosphorylase Kinase, domain 1"/>
    <property type="match status" value="1"/>
</dbReference>
<dbReference type="HAMAP" id="MF_00137">
    <property type="entry name" value="SAICAR_synth"/>
    <property type="match status" value="1"/>
</dbReference>
<dbReference type="InterPro" id="IPR028923">
    <property type="entry name" value="SAICAR_synt/ADE2_N"/>
</dbReference>
<dbReference type="InterPro" id="IPR033934">
    <property type="entry name" value="SAICAR_synt_PurC"/>
</dbReference>
<dbReference type="InterPro" id="IPR001636">
    <property type="entry name" value="SAICAR_synth"/>
</dbReference>
<dbReference type="InterPro" id="IPR050089">
    <property type="entry name" value="SAICAR_synthetase"/>
</dbReference>
<dbReference type="InterPro" id="IPR018236">
    <property type="entry name" value="SAICAR_synthetase_CS"/>
</dbReference>
<dbReference type="NCBIfam" id="TIGR00081">
    <property type="entry name" value="purC"/>
    <property type="match status" value="1"/>
</dbReference>
<dbReference type="PANTHER" id="PTHR43599">
    <property type="entry name" value="MULTIFUNCTIONAL PROTEIN ADE2"/>
    <property type="match status" value="1"/>
</dbReference>
<dbReference type="PANTHER" id="PTHR43599:SF3">
    <property type="entry name" value="SI:DKEY-6E2.2"/>
    <property type="match status" value="1"/>
</dbReference>
<dbReference type="Pfam" id="PF01259">
    <property type="entry name" value="SAICAR_synt"/>
    <property type="match status" value="1"/>
</dbReference>
<dbReference type="SUPFAM" id="SSF56104">
    <property type="entry name" value="SAICAR synthase-like"/>
    <property type="match status" value="1"/>
</dbReference>
<dbReference type="PROSITE" id="PS01057">
    <property type="entry name" value="SAICAR_SYNTHETASE_1"/>
    <property type="match status" value="1"/>
</dbReference>
<proteinExistence type="inferred from homology"/>
<organism>
    <name type="scientific">Exiguobacterium sibiricum (strain DSM 17290 / CCUG 55495 / CIP 109462 / JCM 13490 / 255-15)</name>
    <dbReference type="NCBI Taxonomy" id="262543"/>
    <lineage>
        <taxon>Bacteria</taxon>
        <taxon>Bacillati</taxon>
        <taxon>Bacillota</taxon>
        <taxon>Bacilli</taxon>
        <taxon>Bacillales</taxon>
        <taxon>Bacillales Family XII. Incertae Sedis</taxon>
        <taxon>Exiguobacterium</taxon>
    </lineage>
</organism>
<protein>
    <recommendedName>
        <fullName evidence="1">Phosphoribosylaminoimidazole-succinocarboxamide synthase</fullName>
        <ecNumber evidence="1">6.3.2.6</ecNumber>
    </recommendedName>
    <alternativeName>
        <fullName evidence="1">SAICAR synthetase</fullName>
    </alternativeName>
</protein>
<comment type="catalytic activity">
    <reaction evidence="1">
        <text>5-amino-1-(5-phospho-D-ribosyl)imidazole-4-carboxylate + L-aspartate + ATP = (2S)-2-[5-amino-1-(5-phospho-beta-D-ribosyl)imidazole-4-carboxamido]succinate + ADP + phosphate + 2 H(+)</text>
        <dbReference type="Rhea" id="RHEA:22628"/>
        <dbReference type="ChEBI" id="CHEBI:15378"/>
        <dbReference type="ChEBI" id="CHEBI:29991"/>
        <dbReference type="ChEBI" id="CHEBI:30616"/>
        <dbReference type="ChEBI" id="CHEBI:43474"/>
        <dbReference type="ChEBI" id="CHEBI:58443"/>
        <dbReference type="ChEBI" id="CHEBI:77657"/>
        <dbReference type="ChEBI" id="CHEBI:456216"/>
        <dbReference type="EC" id="6.3.2.6"/>
    </reaction>
</comment>
<comment type="pathway">
    <text evidence="1">Purine metabolism; IMP biosynthesis via de novo pathway; 5-amino-1-(5-phospho-D-ribosyl)imidazole-4-carboxamide from 5-amino-1-(5-phospho-D-ribosyl)imidazole-4-carboxylate: step 1/2.</text>
</comment>
<comment type="similarity">
    <text evidence="1">Belongs to the SAICAR synthetase family.</text>
</comment>
<sequence length="235" mass="26544">MQPLYEGKAKRLYTTQDQDVLRIVYKDEATAFNGEKKAEFAGKGELNNRLTSHFFEVLAAAGIPTHFIEQTSEREQLVRRVTIIPLEVVVRNVVAGSLSKRLGIEEGTVLETPIVEFYYKDDSLGDPLVTPAHINLLKIATTEELSLLEQEANRVNDVLRPYFDEKGITLIDFKLEYGKTPAGEILLADEISPDTCRLWDKETGEHLDKDVFRRNIGSLIDTYQTLFNRLGGNGQ</sequence>
<evidence type="ECO:0000255" key="1">
    <source>
        <dbReference type="HAMAP-Rule" id="MF_00137"/>
    </source>
</evidence>
<reference key="1">
    <citation type="submission" date="2008-04" db="EMBL/GenBank/DDBJ databases">
        <title>Complete sequence of chromosome of Exiguobacterium sibiricum 255-15.</title>
        <authorList>
            <consortium name="US DOE Joint Genome Institute"/>
            <person name="Copeland A."/>
            <person name="Lucas S."/>
            <person name="Lapidus A."/>
            <person name="Glavina del Rio T."/>
            <person name="Dalin E."/>
            <person name="Tice H."/>
            <person name="Bruce D."/>
            <person name="Goodwin L."/>
            <person name="Pitluck S."/>
            <person name="Kiss H."/>
            <person name="Chertkov O."/>
            <person name="Monk C."/>
            <person name="Brettin T."/>
            <person name="Detter J.C."/>
            <person name="Han C."/>
            <person name="Kuske C.R."/>
            <person name="Schmutz J."/>
            <person name="Larimer F."/>
            <person name="Land M."/>
            <person name="Hauser L."/>
            <person name="Kyrpides N."/>
            <person name="Mikhailova N."/>
            <person name="Vishnivetskaya T."/>
            <person name="Rodrigues D.F."/>
            <person name="Gilichinsky D."/>
            <person name="Tiedje J."/>
            <person name="Richardson P."/>
        </authorList>
    </citation>
    <scope>NUCLEOTIDE SEQUENCE [LARGE SCALE GENOMIC DNA]</scope>
    <source>
        <strain>DSM 17290 / CCUG 55495 / CIP 109462 / JCM 13490 / 255-15</strain>
    </source>
</reference>